<proteinExistence type="inferred from homology"/>
<dbReference type="EMBL" id="AY159334">
    <property type="protein sequence ID" value="AAO22212.1"/>
    <property type="molecule type" value="mRNA"/>
</dbReference>
<dbReference type="SMR" id="Q86QV9"/>
<dbReference type="GO" id="GO:0005576">
    <property type="term" value="C:extracellular region"/>
    <property type="evidence" value="ECO:0007669"/>
    <property type="project" value="UniProtKB-SubCell"/>
</dbReference>
<dbReference type="GO" id="GO:0019870">
    <property type="term" value="F:potassium channel inhibitor activity"/>
    <property type="evidence" value="ECO:0007669"/>
    <property type="project" value="InterPro"/>
</dbReference>
<dbReference type="GO" id="GO:0090729">
    <property type="term" value="F:toxin activity"/>
    <property type="evidence" value="ECO:0007669"/>
    <property type="project" value="UniProtKB-KW"/>
</dbReference>
<dbReference type="Gene3D" id="3.30.30.10">
    <property type="entry name" value="Knottin, scorpion toxin-like"/>
    <property type="match status" value="1"/>
</dbReference>
<dbReference type="InterPro" id="IPR012622">
    <property type="entry name" value="Ergtoxin"/>
</dbReference>
<dbReference type="InterPro" id="IPR036574">
    <property type="entry name" value="Scorpion_toxin-like_sf"/>
</dbReference>
<dbReference type="Pfam" id="PF08086">
    <property type="entry name" value="Toxin_17"/>
    <property type="match status" value="1"/>
</dbReference>
<dbReference type="SUPFAM" id="SSF57095">
    <property type="entry name" value="Scorpion toxin-like"/>
    <property type="match status" value="1"/>
</dbReference>
<dbReference type="PROSITE" id="PS60026">
    <property type="entry name" value="ERGTX"/>
    <property type="match status" value="1"/>
</dbReference>
<accession>Q86QV9</accession>
<reference key="1">
    <citation type="journal article" date="2002" name="FEBS Lett.">
        <title>A large number of novel Ergtoxin-like genes and ERG K+-channels blocking peptides from scorpions of the genus Centruroides.</title>
        <authorList>
            <person name="Corona M."/>
            <person name="Gurrola G.B."/>
            <person name="Merino E."/>
            <person name="Cassulini R.R."/>
            <person name="Valdez-Cruz N.A."/>
            <person name="Garcia B."/>
            <person name="Ramirez-Dominguez M.E."/>
            <person name="Coronas F.I."/>
            <person name="Zamudio F.Z."/>
            <person name="Wanke E."/>
            <person name="Possani L.D."/>
        </authorList>
    </citation>
    <scope>NUCLEOTIDE SEQUENCE [MRNA]</scope>
    <scope>NOMENCLATURE</scope>
    <source>
        <tissue>Venom gland</tissue>
    </source>
</reference>
<organism>
    <name type="scientific">Centruroides noxius</name>
    <name type="common">Mexican scorpion</name>
    <dbReference type="NCBI Taxonomy" id="6878"/>
    <lineage>
        <taxon>Eukaryota</taxon>
        <taxon>Metazoa</taxon>
        <taxon>Ecdysozoa</taxon>
        <taxon>Arthropoda</taxon>
        <taxon>Chelicerata</taxon>
        <taxon>Arachnida</taxon>
        <taxon>Scorpiones</taxon>
        <taxon>Buthida</taxon>
        <taxon>Buthoidea</taxon>
        <taxon>Buthidae</taxon>
        <taxon>Centruroides</taxon>
    </lineage>
</organism>
<evidence type="ECO:0000250" key="1"/>
<evidence type="ECO:0000250" key="2">
    <source>
        <dbReference type="UniProtKB" id="P59940"/>
    </source>
</evidence>
<evidence type="ECO:0000250" key="3">
    <source>
        <dbReference type="UniProtKB" id="Q86QT3"/>
    </source>
</evidence>
<evidence type="ECO:0000250" key="4">
    <source>
        <dbReference type="UniProtKB" id="Q86QU9"/>
    </source>
</evidence>
<evidence type="ECO:0000303" key="5">
    <source>
    </source>
</evidence>
<evidence type="ECO:0000305" key="6"/>
<sequence length="43" mass="4813">DRDSCVDKSKCGKYGYYGQCDECCKKAGDRAGTCVYYKCKCNP</sequence>
<name>KGX4D_CENNO</name>
<comment type="function">
    <text evidence="2">Reversibly blocks Kv11/ERG potassium channels.</text>
</comment>
<comment type="subcellular location">
    <subcellularLocation>
        <location evidence="4">Secreted</location>
    </subcellularLocation>
</comment>
<comment type="tissue specificity">
    <text evidence="6">Expressed by the venom gland.</text>
</comment>
<comment type="domain">
    <text evidence="1">The presence of a 'disulfide through disulfide knot' structurally defines this protein as a knottin.</text>
</comment>
<comment type="domain">
    <text evidence="3">Has the CSalpha/beta fold, which comprises one or two short alpha helices connected to anti-parallel beta-sheets stabilized by three or four disulfide bonds.</text>
</comment>
<comment type="similarity">
    <text evidence="6">Belongs to the ergtoxin family. Gamma-KTx 4 subfamily.</text>
</comment>
<protein>
    <recommendedName>
        <fullName evidence="5">Potassium channel toxin gamma-KTx 4.13</fullName>
    </recommendedName>
    <alternativeName>
        <fullName evidence="6">CnErgTx3</fullName>
        <shortName evidence="5">CnErg3</shortName>
        <shortName evidence="5">ErgTx3</shortName>
    </alternativeName>
    <alternativeName>
        <fullName evidence="5">Ergtoxin-like protein</fullName>
    </alternativeName>
</protein>
<feature type="chain" id="PRO_0000066841" description="Potassium channel toxin gamma-KTx 4.13">
    <location>
        <begin position="1"/>
        <end position="43"/>
    </location>
</feature>
<feature type="disulfide bond" evidence="3">
    <location>
        <begin position="5"/>
        <end position="23"/>
    </location>
</feature>
<feature type="disulfide bond" evidence="3">
    <location>
        <begin position="11"/>
        <end position="34"/>
    </location>
</feature>
<feature type="disulfide bond" evidence="3">
    <location>
        <begin position="20"/>
        <end position="39"/>
    </location>
</feature>
<feature type="disulfide bond" evidence="3">
    <location>
        <begin position="24"/>
        <end position="41"/>
    </location>
</feature>
<keyword id="KW-1015">Disulfide bond</keyword>
<keyword id="KW-0872">Ion channel impairing toxin</keyword>
<keyword id="KW-0960">Knottin</keyword>
<keyword id="KW-0528">Neurotoxin</keyword>
<keyword id="KW-0632">Potassium channel impairing toxin</keyword>
<keyword id="KW-0964">Secreted</keyword>
<keyword id="KW-0800">Toxin</keyword>
<keyword id="KW-1220">Voltage-gated potassium channel impairing toxin</keyword>